<protein>
    <recommendedName>
        <fullName evidence="1">Peptidase B</fullName>
        <ecNumber evidence="1">3.4.11.23</ecNumber>
    </recommendedName>
    <alternativeName>
        <fullName evidence="1">Aminopeptidase B</fullName>
    </alternativeName>
</protein>
<gene>
    <name evidence="1" type="primary">pepB</name>
    <name type="ordered locus">SF2570</name>
    <name type="ordered locus">S2742</name>
</gene>
<name>PEPB_SHIFL</name>
<organism>
    <name type="scientific">Shigella flexneri</name>
    <dbReference type="NCBI Taxonomy" id="623"/>
    <lineage>
        <taxon>Bacteria</taxon>
        <taxon>Pseudomonadati</taxon>
        <taxon>Pseudomonadota</taxon>
        <taxon>Gammaproteobacteria</taxon>
        <taxon>Enterobacterales</taxon>
        <taxon>Enterobacteriaceae</taxon>
        <taxon>Shigella</taxon>
    </lineage>
</organism>
<comment type="function">
    <text evidence="1">Probably plays an important role in intracellular peptide degradation.</text>
</comment>
<comment type="catalytic activity">
    <reaction evidence="1">
        <text>Release of an N-terminal amino acid, Xaa, from a peptide or arylamide. Xaa is preferably Glu or Asp but may be other amino acids, including Leu, Met, His, Cys and Gln.</text>
        <dbReference type="EC" id="3.4.11.23"/>
    </reaction>
</comment>
<comment type="cofactor">
    <cofactor evidence="1">
        <name>Mn(2+)</name>
        <dbReference type="ChEBI" id="CHEBI:29035"/>
    </cofactor>
    <text evidence="1">Binds 2 manganese ions per subunit.</text>
</comment>
<comment type="subunit">
    <text evidence="1">Homohexamer.</text>
</comment>
<comment type="subcellular location">
    <subcellularLocation>
        <location evidence="1">Cytoplasm</location>
    </subcellularLocation>
</comment>
<comment type="similarity">
    <text evidence="1">Belongs to the peptidase M17 family.</text>
</comment>
<dbReference type="EC" id="3.4.11.23" evidence="1"/>
<dbReference type="EMBL" id="AE005674">
    <property type="protein sequence ID" value="AAN44069.1"/>
    <property type="molecule type" value="Genomic_DNA"/>
</dbReference>
<dbReference type="EMBL" id="AE014073">
    <property type="protein sequence ID" value="AAP17894.1"/>
    <property type="molecule type" value="Genomic_DNA"/>
</dbReference>
<dbReference type="RefSeq" id="NP_708362.1">
    <property type="nucleotide sequence ID" value="NC_004337.2"/>
</dbReference>
<dbReference type="RefSeq" id="WP_000133598.1">
    <property type="nucleotide sequence ID" value="NZ_WPGW01000021.1"/>
</dbReference>
<dbReference type="SMR" id="Q83QK5"/>
<dbReference type="STRING" id="198214.SF2570"/>
<dbReference type="MEROPS" id="M17.004"/>
<dbReference type="PaxDb" id="198214-SF2570"/>
<dbReference type="GeneID" id="1023954"/>
<dbReference type="KEGG" id="sfl:SF2570"/>
<dbReference type="KEGG" id="sfx:S2742"/>
<dbReference type="PATRIC" id="fig|198214.7.peg.3069"/>
<dbReference type="HOGENOM" id="CLU_013734_7_1_6"/>
<dbReference type="Proteomes" id="UP000001006">
    <property type="component" value="Chromosome"/>
</dbReference>
<dbReference type="Proteomes" id="UP000002673">
    <property type="component" value="Chromosome"/>
</dbReference>
<dbReference type="GO" id="GO:0005737">
    <property type="term" value="C:cytoplasm"/>
    <property type="evidence" value="ECO:0007669"/>
    <property type="project" value="UniProtKB-SubCell"/>
</dbReference>
<dbReference type="GO" id="GO:0030145">
    <property type="term" value="F:manganese ion binding"/>
    <property type="evidence" value="ECO:0007669"/>
    <property type="project" value="UniProtKB-UniRule"/>
</dbReference>
<dbReference type="GO" id="GO:0070006">
    <property type="term" value="F:metalloaminopeptidase activity"/>
    <property type="evidence" value="ECO:0007669"/>
    <property type="project" value="InterPro"/>
</dbReference>
<dbReference type="GO" id="GO:0006508">
    <property type="term" value="P:proteolysis"/>
    <property type="evidence" value="ECO:0007669"/>
    <property type="project" value="UniProtKB-UniRule"/>
</dbReference>
<dbReference type="CDD" id="cd00433">
    <property type="entry name" value="Peptidase_M17"/>
    <property type="match status" value="1"/>
</dbReference>
<dbReference type="FunFam" id="3.40.630.10:FF:000037">
    <property type="entry name" value="Peptidase B"/>
    <property type="match status" value="1"/>
</dbReference>
<dbReference type="Gene3D" id="3.40.630.10">
    <property type="entry name" value="Zn peptidases"/>
    <property type="match status" value="1"/>
</dbReference>
<dbReference type="HAMAP" id="MF_00504">
    <property type="entry name" value="Aminopeptidase_M17"/>
    <property type="match status" value="1"/>
</dbReference>
<dbReference type="InterPro" id="IPR011356">
    <property type="entry name" value="Leucine_aapep/pepB"/>
</dbReference>
<dbReference type="InterPro" id="IPR047620">
    <property type="entry name" value="M17_PepB-like_N"/>
</dbReference>
<dbReference type="InterPro" id="IPR008330">
    <property type="entry name" value="Pept_M17_PepB"/>
</dbReference>
<dbReference type="InterPro" id="IPR000819">
    <property type="entry name" value="Peptidase_M17_C"/>
</dbReference>
<dbReference type="NCBIfam" id="NF003450">
    <property type="entry name" value="PRK05015.1"/>
    <property type="match status" value="1"/>
</dbReference>
<dbReference type="PANTHER" id="PTHR11963">
    <property type="entry name" value="LEUCINE AMINOPEPTIDASE-RELATED"/>
    <property type="match status" value="1"/>
</dbReference>
<dbReference type="PANTHER" id="PTHR11963:SF20">
    <property type="entry name" value="PEPTIDASE B"/>
    <property type="match status" value="1"/>
</dbReference>
<dbReference type="Pfam" id="PF12404">
    <property type="entry name" value="DUF3663"/>
    <property type="match status" value="1"/>
</dbReference>
<dbReference type="Pfam" id="PF00883">
    <property type="entry name" value="Peptidase_M17"/>
    <property type="match status" value="1"/>
</dbReference>
<dbReference type="PIRSF" id="PIRSF036388">
    <property type="entry name" value="Ctsl_amnpptdse_B"/>
    <property type="match status" value="1"/>
</dbReference>
<dbReference type="PRINTS" id="PR00481">
    <property type="entry name" value="LAMNOPPTDASE"/>
</dbReference>
<dbReference type="SUPFAM" id="SSF53187">
    <property type="entry name" value="Zn-dependent exopeptidases"/>
    <property type="match status" value="1"/>
</dbReference>
<dbReference type="PROSITE" id="PS00631">
    <property type="entry name" value="CYTOSOL_AP"/>
    <property type="match status" value="1"/>
</dbReference>
<sequence>MTEAMKITLSTQPADARWGEKATYSINNDGITLHLNGADDLGLIQRAARKIDGLGIKHVQLSGEGWDADRCWAFWQGYKGPKGTRKVEWPDLDDAQRQELDNRLMIIDWVRDTINAPAEELGPSQLAQRAVDLISNVAGDRVTYRITKGEDLREQGYMGLHTVGRGSERSPVLLALDYNPTGDKEAPVYACLVGKGITFDSGGYSIKQTAFMDSMKSDMGGAATVTGALAFAIMRGLNKRVKLFLCCADNLISGNAFKLGDIITYRNGKKVEVMNTDAEGRLVLADGLIDASAQKPEMIIDAATLTGAAKTALGNDYHALFSFDDALAGRLLASASQENEPFWRLPLAEFHRSQLPSNFAELNNTGSAAYPAGASTAAGFLSHFVENYQQGWLHIDCSATYRKAPVEQWSAGATGLGVRTIANLLTA</sequence>
<accession>Q83QK5</accession>
<accession>Q7C0G7</accession>
<evidence type="ECO:0000255" key="1">
    <source>
        <dbReference type="HAMAP-Rule" id="MF_00504"/>
    </source>
</evidence>
<reference key="1">
    <citation type="journal article" date="2002" name="Nucleic Acids Res.">
        <title>Genome sequence of Shigella flexneri 2a: insights into pathogenicity through comparison with genomes of Escherichia coli K12 and O157.</title>
        <authorList>
            <person name="Jin Q."/>
            <person name="Yuan Z."/>
            <person name="Xu J."/>
            <person name="Wang Y."/>
            <person name="Shen Y."/>
            <person name="Lu W."/>
            <person name="Wang J."/>
            <person name="Liu H."/>
            <person name="Yang J."/>
            <person name="Yang F."/>
            <person name="Zhang X."/>
            <person name="Zhang J."/>
            <person name="Yang G."/>
            <person name="Wu H."/>
            <person name="Qu D."/>
            <person name="Dong J."/>
            <person name="Sun L."/>
            <person name="Xue Y."/>
            <person name="Zhao A."/>
            <person name="Gao Y."/>
            <person name="Zhu J."/>
            <person name="Kan B."/>
            <person name="Ding K."/>
            <person name="Chen S."/>
            <person name="Cheng H."/>
            <person name="Yao Z."/>
            <person name="He B."/>
            <person name="Chen R."/>
            <person name="Ma D."/>
            <person name="Qiang B."/>
            <person name="Wen Y."/>
            <person name="Hou Y."/>
            <person name="Yu J."/>
        </authorList>
    </citation>
    <scope>NUCLEOTIDE SEQUENCE [LARGE SCALE GENOMIC DNA]</scope>
    <source>
        <strain>301 / Serotype 2a</strain>
    </source>
</reference>
<reference key="2">
    <citation type="journal article" date="2003" name="Infect. Immun.">
        <title>Complete genome sequence and comparative genomics of Shigella flexneri serotype 2a strain 2457T.</title>
        <authorList>
            <person name="Wei J."/>
            <person name="Goldberg M.B."/>
            <person name="Burland V."/>
            <person name="Venkatesan M.M."/>
            <person name="Deng W."/>
            <person name="Fournier G."/>
            <person name="Mayhew G.F."/>
            <person name="Plunkett G. III"/>
            <person name="Rose D.J."/>
            <person name="Darling A."/>
            <person name="Mau B."/>
            <person name="Perna N.T."/>
            <person name="Payne S.M."/>
            <person name="Runyen-Janecky L.J."/>
            <person name="Zhou S."/>
            <person name="Schwartz D.C."/>
            <person name="Blattner F.R."/>
        </authorList>
    </citation>
    <scope>NUCLEOTIDE SEQUENCE [LARGE SCALE GENOMIC DNA]</scope>
    <source>
        <strain>ATCC 700930 / 2457T / Serotype 2a</strain>
    </source>
</reference>
<keyword id="KW-0031">Aminopeptidase</keyword>
<keyword id="KW-0963">Cytoplasm</keyword>
<keyword id="KW-0378">Hydrolase</keyword>
<keyword id="KW-0464">Manganese</keyword>
<keyword id="KW-0479">Metal-binding</keyword>
<keyword id="KW-0645">Protease</keyword>
<keyword id="KW-1185">Reference proteome</keyword>
<feature type="chain" id="PRO_0000165845" description="Peptidase B">
    <location>
        <begin position="1"/>
        <end position="427"/>
    </location>
</feature>
<feature type="active site" evidence="1">
    <location>
        <position position="207"/>
    </location>
</feature>
<feature type="active site" evidence="1">
    <location>
        <position position="281"/>
    </location>
</feature>
<feature type="binding site" evidence="1">
    <location>
        <position position="195"/>
    </location>
    <ligand>
        <name>Mn(2+)</name>
        <dbReference type="ChEBI" id="CHEBI:29035"/>
        <label>2</label>
    </ligand>
</feature>
<feature type="binding site" evidence="1">
    <location>
        <position position="200"/>
    </location>
    <ligand>
        <name>Mn(2+)</name>
        <dbReference type="ChEBI" id="CHEBI:29035"/>
        <label>1</label>
    </ligand>
</feature>
<feature type="binding site" evidence="1">
    <location>
        <position position="200"/>
    </location>
    <ligand>
        <name>Mn(2+)</name>
        <dbReference type="ChEBI" id="CHEBI:29035"/>
        <label>2</label>
    </ligand>
</feature>
<feature type="binding site" evidence="1">
    <location>
        <position position="218"/>
    </location>
    <ligand>
        <name>Mn(2+)</name>
        <dbReference type="ChEBI" id="CHEBI:29035"/>
        <label>2</label>
    </ligand>
</feature>
<feature type="binding site" evidence="1">
    <location>
        <position position="277"/>
    </location>
    <ligand>
        <name>Mn(2+)</name>
        <dbReference type="ChEBI" id="CHEBI:29035"/>
        <label>1</label>
    </ligand>
</feature>
<feature type="binding site" evidence="1">
    <location>
        <position position="279"/>
    </location>
    <ligand>
        <name>Mn(2+)</name>
        <dbReference type="ChEBI" id="CHEBI:29035"/>
        <label>1</label>
    </ligand>
</feature>
<feature type="binding site" evidence="1">
    <location>
        <position position="279"/>
    </location>
    <ligand>
        <name>Mn(2+)</name>
        <dbReference type="ChEBI" id="CHEBI:29035"/>
        <label>2</label>
    </ligand>
</feature>
<proteinExistence type="inferred from homology"/>